<accession>Q72JU8</accession>
<protein>
    <recommendedName>
        <fullName evidence="1">tRNA (guanine-N(1)-)-methyltransferase</fullName>
        <ecNumber evidence="1">2.1.1.228</ecNumber>
    </recommendedName>
    <alternativeName>
        <fullName evidence="1">M1G-methyltransferase</fullName>
    </alternativeName>
    <alternativeName>
        <fullName evidence="1">tRNA [GM37] methyltransferase</fullName>
    </alternativeName>
</protein>
<reference key="1">
    <citation type="journal article" date="2004" name="Nat. Biotechnol.">
        <title>The genome sequence of the extreme thermophile Thermus thermophilus.</title>
        <authorList>
            <person name="Henne A."/>
            <person name="Brueggemann H."/>
            <person name="Raasch C."/>
            <person name="Wiezer A."/>
            <person name="Hartsch T."/>
            <person name="Liesegang H."/>
            <person name="Johann A."/>
            <person name="Lienard T."/>
            <person name="Gohl O."/>
            <person name="Martinez-Arias R."/>
            <person name="Jacobi C."/>
            <person name="Starkuviene V."/>
            <person name="Schlenczeck S."/>
            <person name="Dencker S."/>
            <person name="Huber R."/>
            <person name="Klenk H.-P."/>
            <person name="Kramer W."/>
            <person name="Merkl R."/>
            <person name="Gottschalk G."/>
            <person name="Fritz H.-J."/>
        </authorList>
    </citation>
    <scope>NUCLEOTIDE SEQUENCE [LARGE SCALE GENOMIC DNA]</scope>
    <source>
        <strain>ATCC BAA-163 / DSM 7039 / HB27</strain>
    </source>
</reference>
<sequence>MRYTVITLFPNLVRPWLEESLLKKALERGLIQVEVVDLRAFGLGRHRTVDDTPYGGGAGMVIRPDVAVAALERALPADEVVLLSPAGRPFTQKVAEELAGKEHLVLLAGRYEGFDARVEAFATRILSIGDYVLMGGEVAALAVLEATARLVPGVIGDPQSHREDSFVRGLLDYPQYTRPPEFRGLRVPEVLLSGHHQEVERWRRQEALRRTLALRPELVARAPLSLLEARLLAEMDREE</sequence>
<name>TRMD_THET2</name>
<proteinExistence type="inferred from homology"/>
<comment type="function">
    <text evidence="1">Specifically methylates guanosine-37 in various tRNAs.</text>
</comment>
<comment type="catalytic activity">
    <reaction evidence="1">
        <text>guanosine(37) in tRNA + S-adenosyl-L-methionine = N(1)-methylguanosine(37) in tRNA + S-adenosyl-L-homocysteine + H(+)</text>
        <dbReference type="Rhea" id="RHEA:36899"/>
        <dbReference type="Rhea" id="RHEA-COMP:10145"/>
        <dbReference type="Rhea" id="RHEA-COMP:10147"/>
        <dbReference type="ChEBI" id="CHEBI:15378"/>
        <dbReference type="ChEBI" id="CHEBI:57856"/>
        <dbReference type="ChEBI" id="CHEBI:59789"/>
        <dbReference type="ChEBI" id="CHEBI:73542"/>
        <dbReference type="ChEBI" id="CHEBI:74269"/>
        <dbReference type="EC" id="2.1.1.228"/>
    </reaction>
</comment>
<comment type="subunit">
    <text evidence="1">Homodimer.</text>
</comment>
<comment type="subcellular location">
    <subcellularLocation>
        <location evidence="1">Cytoplasm</location>
    </subcellularLocation>
</comment>
<comment type="similarity">
    <text evidence="1">Belongs to the RNA methyltransferase TrmD family.</text>
</comment>
<gene>
    <name evidence="1" type="primary">trmD</name>
    <name type="ordered locus">TT_C0670</name>
</gene>
<feature type="chain" id="PRO_0000060485" description="tRNA (guanine-N(1)-)-methyltransferase">
    <location>
        <begin position="1"/>
        <end position="239"/>
    </location>
</feature>
<feature type="binding site" evidence="1">
    <location>
        <position position="109"/>
    </location>
    <ligand>
        <name>S-adenosyl-L-methionine</name>
        <dbReference type="ChEBI" id="CHEBI:59789"/>
    </ligand>
</feature>
<feature type="binding site" evidence="1">
    <location>
        <begin position="128"/>
        <end position="133"/>
    </location>
    <ligand>
        <name>S-adenosyl-L-methionine</name>
        <dbReference type="ChEBI" id="CHEBI:59789"/>
    </ligand>
</feature>
<keyword id="KW-0963">Cytoplasm</keyword>
<keyword id="KW-0489">Methyltransferase</keyword>
<keyword id="KW-0949">S-adenosyl-L-methionine</keyword>
<keyword id="KW-0808">Transferase</keyword>
<keyword id="KW-0819">tRNA processing</keyword>
<dbReference type="EC" id="2.1.1.228" evidence="1"/>
<dbReference type="EMBL" id="AE017221">
    <property type="protein sequence ID" value="AAS81018.1"/>
    <property type="molecule type" value="Genomic_DNA"/>
</dbReference>
<dbReference type="RefSeq" id="WP_011173113.1">
    <property type="nucleotide sequence ID" value="NC_005835.1"/>
</dbReference>
<dbReference type="SMR" id="Q72JU8"/>
<dbReference type="KEGG" id="tth:TT_C0670"/>
<dbReference type="eggNOG" id="COG0336">
    <property type="taxonomic scope" value="Bacteria"/>
</dbReference>
<dbReference type="HOGENOM" id="CLU_047363_0_1_0"/>
<dbReference type="OrthoDB" id="9807416at2"/>
<dbReference type="Proteomes" id="UP000000592">
    <property type="component" value="Chromosome"/>
</dbReference>
<dbReference type="GO" id="GO:0005829">
    <property type="term" value="C:cytosol"/>
    <property type="evidence" value="ECO:0007669"/>
    <property type="project" value="TreeGrafter"/>
</dbReference>
<dbReference type="GO" id="GO:0052906">
    <property type="term" value="F:tRNA (guanine(37)-N1)-methyltransferase activity"/>
    <property type="evidence" value="ECO:0007669"/>
    <property type="project" value="UniProtKB-UniRule"/>
</dbReference>
<dbReference type="GO" id="GO:0002939">
    <property type="term" value="P:tRNA N1-guanine methylation"/>
    <property type="evidence" value="ECO:0007669"/>
    <property type="project" value="TreeGrafter"/>
</dbReference>
<dbReference type="CDD" id="cd18080">
    <property type="entry name" value="TrmD-like"/>
    <property type="match status" value="1"/>
</dbReference>
<dbReference type="FunFam" id="1.10.1270.20:FF:000001">
    <property type="entry name" value="tRNA (guanine-N(1)-)-methyltransferase"/>
    <property type="match status" value="1"/>
</dbReference>
<dbReference type="Gene3D" id="3.40.1280.10">
    <property type="match status" value="1"/>
</dbReference>
<dbReference type="Gene3D" id="1.10.1270.20">
    <property type="entry name" value="tRNA(m1g37)methyltransferase, domain 2"/>
    <property type="match status" value="1"/>
</dbReference>
<dbReference type="HAMAP" id="MF_00605">
    <property type="entry name" value="TrmD"/>
    <property type="match status" value="1"/>
</dbReference>
<dbReference type="InterPro" id="IPR029028">
    <property type="entry name" value="Alpha/beta_knot_MTases"/>
</dbReference>
<dbReference type="InterPro" id="IPR023148">
    <property type="entry name" value="tRNA_m1G_MeTrfase_C_sf"/>
</dbReference>
<dbReference type="InterPro" id="IPR002649">
    <property type="entry name" value="tRNA_m1G_MeTrfase_TrmD"/>
</dbReference>
<dbReference type="InterPro" id="IPR029026">
    <property type="entry name" value="tRNA_m1G_MTases_N"/>
</dbReference>
<dbReference type="InterPro" id="IPR016009">
    <property type="entry name" value="tRNA_MeTrfase_TRMD/TRM10"/>
</dbReference>
<dbReference type="NCBIfam" id="NF000648">
    <property type="entry name" value="PRK00026.1"/>
    <property type="match status" value="1"/>
</dbReference>
<dbReference type="NCBIfam" id="TIGR00088">
    <property type="entry name" value="trmD"/>
    <property type="match status" value="1"/>
</dbReference>
<dbReference type="PANTHER" id="PTHR46417">
    <property type="entry name" value="TRNA (GUANINE-N(1)-)-METHYLTRANSFERASE"/>
    <property type="match status" value="1"/>
</dbReference>
<dbReference type="PANTHER" id="PTHR46417:SF1">
    <property type="entry name" value="TRNA (GUANINE-N(1)-)-METHYLTRANSFERASE"/>
    <property type="match status" value="1"/>
</dbReference>
<dbReference type="Pfam" id="PF01746">
    <property type="entry name" value="tRNA_m1G_MT"/>
    <property type="match status" value="1"/>
</dbReference>
<dbReference type="PIRSF" id="PIRSF000386">
    <property type="entry name" value="tRNA_mtase"/>
    <property type="match status" value="1"/>
</dbReference>
<dbReference type="SUPFAM" id="SSF75217">
    <property type="entry name" value="alpha/beta knot"/>
    <property type="match status" value="1"/>
</dbReference>
<evidence type="ECO:0000255" key="1">
    <source>
        <dbReference type="HAMAP-Rule" id="MF_00605"/>
    </source>
</evidence>
<organism>
    <name type="scientific">Thermus thermophilus (strain ATCC BAA-163 / DSM 7039 / HB27)</name>
    <dbReference type="NCBI Taxonomy" id="262724"/>
    <lineage>
        <taxon>Bacteria</taxon>
        <taxon>Thermotogati</taxon>
        <taxon>Deinococcota</taxon>
        <taxon>Deinococci</taxon>
        <taxon>Thermales</taxon>
        <taxon>Thermaceae</taxon>
        <taxon>Thermus</taxon>
    </lineage>
</organism>